<protein>
    <recommendedName>
        <fullName evidence="1">DnaA initiator-associating protein DiaA</fullName>
    </recommendedName>
</protein>
<evidence type="ECO:0000255" key="1">
    <source>
        <dbReference type="HAMAP-Rule" id="MF_01157"/>
    </source>
</evidence>
<reference key="1">
    <citation type="journal article" date="2009" name="BMC Genomics">
        <title>Pseudogene accumulation in the evolutionary histories of Salmonella enterica serovars Paratyphi A and Typhi.</title>
        <authorList>
            <person name="Holt K.E."/>
            <person name="Thomson N.R."/>
            <person name="Wain J."/>
            <person name="Langridge G.C."/>
            <person name="Hasan R."/>
            <person name="Bhutta Z.A."/>
            <person name="Quail M.A."/>
            <person name="Norbertczak H."/>
            <person name="Walker D."/>
            <person name="Simmonds M."/>
            <person name="White B."/>
            <person name="Bason N."/>
            <person name="Mungall K."/>
            <person name="Dougan G."/>
            <person name="Parkhill J."/>
        </authorList>
    </citation>
    <scope>NUCLEOTIDE SEQUENCE [LARGE SCALE GENOMIC DNA]</scope>
    <source>
        <strain>AKU_12601</strain>
    </source>
</reference>
<name>DIAA_SALPK</name>
<accession>B5BGH8</accession>
<organism>
    <name type="scientific">Salmonella paratyphi A (strain AKU_12601)</name>
    <dbReference type="NCBI Taxonomy" id="554290"/>
    <lineage>
        <taxon>Bacteria</taxon>
        <taxon>Pseudomonadati</taxon>
        <taxon>Pseudomonadota</taxon>
        <taxon>Gammaproteobacteria</taxon>
        <taxon>Enterobacterales</taxon>
        <taxon>Enterobacteriaceae</taxon>
        <taxon>Salmonella</taxon>
    </lineage>
</organism>
<sequence>MLERIKVCFTESIQTQIAAAEALPDAISRAAMTLVHSLLNGNKILCCGNGTSAANAQHFAASMINRFETERPSLPAIALNTDNVVLTAIANDRLHDEVYAKQVRALGHAGDVLLAISTRGNSRDIVKAVEAAVTRDMTIVALTGYDGGELAGLLGPQDVEIRIPSHHSARIQEMHMLTVNCLCDLIDNTLFLHQDD</sequence>
<gene>
    <name evidence="1" type="primary">diaA</name>
    <name type="ordered locus">SSPA2927</name>
</gene>
<dbReference type="EMBL" id="FM200053">
    <property type="protein sequence ID" value="CAR61175.1"/>
    <property type="molecule type" value="Genomic_DNA"/>
</dbReference>
<dbReference type="RefSeq" id="WP_000893480.1">
    <property type="nucleotide sequence ID" value="NC_011147.1"/>
</dbReference>
<dbReference type="SMR" id="B5BGH8"/>
<dbReference type="KEGG" id="sek:SSPA2927"/>
<dbReference type="HOGENOM" id="CLU_080999_3_1_6"/>
<dbReference type="Proteomes" id="UP000001869">
    <property type="component" value="Chromosome"/>
</dbReference>
<dbReference type="GO" id="GO:0097367">
    <property type="term" value="F:carbohydrate derivative binding"/>
    <property type="evidence" value="ECO:0007669"/>
    <property type="project" value="InterPro"/>
</dbReference>
<dbReference type="GO" id="GO:1901135">
    <property type="term" value="P:carbohydrate derivative metabolic process"/>
    <property type="evidence" value="ECO:0007669"/>
    <property type="project" value="InterPro"/>
</dbReference>
<dbReference type="GO" id="GO:0006260">
    <property type="term" value="P:DNA replication"/>
    <property type="evidence" value="ECO:0007669"/>
    <property type="project" value="UniProtKB-UniRule"/>
</dbReference>
<dbReference type="CDD" id="cd05006">
    <property type="entry name" value="SIS_GmhA"/>
    <property type="match status" value="1"/>
</dbReference>
<dbReference type="FunFam" id="3.40.50.10490:FF:000006">
    <property type="entry name" value="DnaA initiator-associating protein DiaA"/>
    <property type="match status" value="1"/>
</dbReference>
<dbReference type="Gene3D" id="3.40.50.10490">
    <property type="entry name" value="Glucose-6-phosphate isomerase like protein, domain 1"/>
    <property type="match status" value="1"/>
</dbReference>
<dbReference type="HAMAP" id="MF_01157">
    <property type="entry name" value="SIS_DiaA"/>
    <property type="match status" value="1"/>
</dbReference>
<dbReference type="InterPro" id="IPR023070">
    <property type="entry name" value="DiaA"/>
</dbReference>
<dbReference type="InterPro" id="IPR035461">
    <property type="entry name" value="GmhA/DiaA"/>
</dbReference>
<dbReference type="InterPro" id="IPR001347">
    <property type="entry name" value="SIS_dom"/>
</dbReference>
<dbReference type="InterPro" id="IPR046348">
    <property type="entry name" value="SIS_dom_sf"/>
</dbReference>
<dbReference type="InterPro" id="IPR050099">
    <property type="entry name" value="SIS_GmhA/DiaA_subfam"/>
</dbReference>
<dbReference type="NCBIfam" id="NF008138">
    <property type="entry name" value="PRK10886.1"/>
    <property type="match status" value="1"/>
</dbReference>
<dbReference type="PANTHER" id="PTHR30390:SF6">
    <property type="entry name" value="DNAA INITIATOR-ASSOCIATING PROTEIN DIAA"/>
    <property type="match status" value="1"/>
</dbReference>
<dbReference type="PANTHER" id="PTHR30390">
    <property type="entry name" value="SEDOHEPTULOSE 7-PHOSPHATE ISOMERASE / DNAA INITIATOR-ASSOCIATING FACTOR FOR REPLICATION INITIATION"/>
    <property type="match status" value="1"/>
</dbReference>
<dbReference type="Pfam" id="PF13580">
    <property type="entry name" value="SIS_2"/>
    <property type="match status" value="1"/>
</dbReference>
<dbReference type="SUPFAM" id="SSF53697">
    <property type="entry name" value="SIS domain"/>
    <property type="match status" value="1"/>
</dbReference>
<dbReference type="PROSITE" id="PS51464">
    <property type="entry name" value="SIS"/>
    <property type="match status" value="1"/>
</dbReference>
<proteinExistence type="inferred from homology"/>
<keyword id="KW-0235">DNA replication</keyword>
<feature type="chain" id="PRO_1000137801" description="DnaA initiator-associating protein DiaA">
    <location>
        <begin position="1"/>
        <end position="196"/>
    </location>
</feature>
<feature type="domain" description="SIS" evidence="1">
    <location>
        <begin position="34"/>
        <end position="196"/>
    </location>
</feature>
<comment type="function">
    <text evidence="1">Required for the timely initiation of chromosomal replication via direct interactions with the DnaA initiator protein.</text>
</comment>
<comment type="subunit">
    <text evidence="1">Homotetramer; dimer of dimers.</text>
</comment>
<comment type="similarity">
    <text evidence="1">Belongs to the SIS family. DiaA subfamily.</text>
</comment>